<proteinExistence type="inferred from homology"/>
<comment type="function">
    <text evidence="1">An RNase that has 5'-3' exonuclease and possibly endoonuclease activity. Involved in maturation of rRNA and in some organisms also mRNA maturation and/or decay (By similarity).</text>
</comment>
<comment type="cofactor">
    <cofactor evidence="2">
        <name>Zn(2+)</name>
        <dbReference type="ChEBI" id="CHEBI:29105"/>
    </cofactor>
    <text evidence="2">Binds up to 2 Zn(2+) ions per subunit. It is not clear if Zn(2+) or Mg(2+) is physiologically important.</text>
</comment>
<comment type="subunit">
    <text evidence="2">Homodimer, may be a subunit of the RNA degradosome.</text>
</comment>
<comment type="subcellular location">
    <subcellularLocation>
        <location evidence="2">Cytoplasm</location>
    </subcellularLocation>
</comment>
<comment type="similarity">
    <text evidence="2">Belongs to the metallo-beta-lactamase superfamily. RNA-metabolizing metallo-beta-lactamase-like family. Bacterial RNase J subfamily.</text>
</comment>
<sequence>MKQLHPNEVGVYALGGLGEIGKNTYAVEYKDEIVIIDAGIKFPDDNLLGIDYVIPDYTYLVQNQDKIVGLFITHGHEDHIGGVPFLLKQLNIPIYGGPLALGLIRNKLEEHHLLRTAKLNEINEDSVIKSKHFTISFYLTTHSIPETYGVIVDTPEGKVVHTGDFKFDFTPVGKPANIAKMAQLGEEGVLCLLSDSTNSLVPDFTLSEREVGQNVDKIFRNCKGRIIFATFASNIYRVQQAVEAAIKNNRKIVTFGRSMENNIKIGMELGYIKAPPETFIEPNKINTVPKHELLILCTGSQGEPMAALSRIANGTHKQIKIIPEDTVVFSSSPIPGNTKSINRTINSLYKAGADVIHSKISNIHTSGHGSQGDQQLMLRLIKPKYFLPIHGEYRMLKAHGETGVECGVEEDNVFIFDIGDVLALTHDSARKAGRIPSGNVLVDGSGIGDIGNVVIRDRKLLSEEGLVIVVVSIDFNTNKLLSGPDIISRGFVYMRESGQLIYDAQRKIKTDVISKLNQNKDIQWHQIKSSIIETLQPYLFEKTARKPMILPVIMKVNEQKESNNK</sequence>
<accession>Q2FHZ1</accession>
<reference key="1">
    <citation type="journal article" date="2006" name="Lancet">
        <title>Complete genome sequence of USA300, an epidemic clone of community-acquired meticillin-resistant Staphylococcus aureus.</title>
        <authorList>
            <person name="Diep B.A."/>
            <person name="Gill S.R."/>
            <person name="Chang R.F."/>
            <person name="Phan T.H."/>
            <person name="Chen J.H."/>
            <person name="Davidson M.G."/>
            <person name="Lin F."/>
            <person name="Lin J."/>
            <person name="Carleton H.A."/>
            <person name="Mongodin E.F."/>
            <person name="Sensabaugh G.F."/>
            <person name="Perdreau-Remington F."/>
        </authorList>
    </citation>
    <scope>NUCLEOTIDE SEQUENCE [LARGE SCALE GENOMIC DNA]</scope>
    <source>
        <strain>USA300</strain>
    </source>
</reference>
<gene>
    <name evidence="2" type="primary">rnj1</name>
    <name type="ordered locus">SAUSA300_0989</name>
</gene>
<name>RNJ1_STAA3</name>
<evidence type="ECO:0000250" key="1"/>
<evidence type="ECO:0000255" key="2">
    <source>
        <dbReference type="HAMAP-Rule" id="MF_01491"/>
    </source>
</evidence>
<keyword id="KW-0963">Cytoplasm</keyword>
<keyword id="KW-0255">Endonuclease</keyword>
<keyword id="KW-0269">Exonuclease</keyword>
<keyword id="KW-0378">Hydrolase</keyword>
<keyword id="KW-0479">Metal-binding</keyword>
<keyword id="KW-0540">Nuclease</keyword>
<keyword id="KW-0694">RNA-binding</keyword>
<keyword id="KW-0698">rRNA processing</keyword>
<keyword id="KW-0862">Zinc</keyword>
<feature type="chain" id="PRO_0000286835" description="Ribonuclease J 1">
    <location>
        <begin position="1"/>
        <end position="565"/>
    </location>
</feature>
<feature type="binding site" evidence="2">
    <location>
        <position position="74"/>
    </location>
    <ligand>
        <name>Zn(2+)</name>
        <dbReference type="ChEBI" id="CHEBI:29105"/>
        <label>1</label>
        <note>catalytic</note>
    </ligand>
</feature>
<feature type="binding site" evidence="2">
    <location>
        <position position="76"/>
    </location>
    <ligand>
        <name>Zn(2+)</name>
        <dbReference type="ChEBI" id="CHEBI:29105"/>
        <label>1</label>
        <note>catalytic</note>
    </ligand>
</feature>
<feature type="binding site" evidence="2">
    <location>
        <position position="78"/>
    </location>
    <ligand>
        <name>Zn(2+)</name>
        <dbReference type="ChEBI" id="CHEBI:29105"/>
        <label>2</label>
        <note>catalytic</note>
    </ligand>
</feature>
<feature type="binding site" evidence="2">
    <location>
        <position position="79"/>
    </location>
    <ligand>
        <name>Zn(2+)</name>
        <dbReference type="ChEBI" id="CHEBI:29105"/>
        <label>2</label>
        <note>catalytic</note>
    </ligand>
</feature>
<feature type="binding site" evidence="2">
    <location>
        <position position="142"/>
    </location>
    <ligand>
        <name>Zn(2+)</name>
        <dbReference type="ChEBI" id="CHEBI:29105"/>
        <label>1</label>
        <note>catalytic</note>
    </ligand>
</feature>
<feature type="binding site" evidence="2">
    <location>
        <position position="164"/>
    </location>
    <ligand>
        <name>Zn(2+)</name>
        <dbReference type="ChEBI" id="CHEBI:29105"/>
        <label>1</label>
        <note>catalytic</note>
    </ligand>
</feature>
<feature type="binding site" evidence="2">
    <location>
        <position position="164"/>
    </location>
    <ligand>
        <name>Zn(2+)</name>
        <dbReference type="ChEBI" id="CHEBI:29105"/>
        <label>2</label>
        <note>catalytic</note>
    </ligand>
</feature>
<feature type="binding site" evidence="2">
    <location>
        <begin position="364"/>
        <end position="368"/>
    </location>
    <ligand>
        <name>substrate</name>
    </ligand>
</feature>
<feature type="binding site" evidence="2">
    <location>
        <position position="390"/>
    </location>
    <ligand>
        <name>Zn(2+)</name>
        <dbReference type="ChEBI" id="CHEBI:29105"/>
        <label>2</label>
        <note>catalytic</note>
    </ligand>
</feature>
<organism>
    <name type="scientific">Staphylococcus aureus (strain USA300)</name>
    <dbReference type="NCBI Taxonomy" id="367830"/>
    <lineage>
        <taxon>Bacteria</taxon>
        <taxon>Bacillati</taxon>
        <taxon>Bacillota</taxon>
        <taxon>Bacilli</taxon>
        <taxon>Bacillales</taxon>
        <taxon>Staphylococcaceae</taxon>
        <taxon>Staphylococcus</taxon>
    </lineage>
</organism>
<protein>
    <recommendedName>
        <fullName evidence="2">Ribonuclease J 1</fullName>
        <shortName evidence="2">RNase J1</shortName>
        <ecNumber evidence="2">3.1.-.-</ecNumber>
    </recommendedName>
</protein>
<dbReference type="EC" id="3.1.-.-" evidence="2"/>
<dbReference type="EMBL" id="CP000255">
    <property type="protein sequence ID" value="ABD20444.1"/>
    <property type="molecule type" value="Genomic_DNA"/>
</dbReference>
<dbReference type="SMR" id="Q2FHZ1"/>
<dbReference type="KEGG" id="saa:SAUSA300_0989"/>
<dbReference type="HOGENOM" id="CLU_008727_3_1_9"/>
<dbReference type="OMA" id="KNTCVFE"/>
<dbReference type="Proteomes" id="UP000001939">
    <property type="component" value="Chromosome"/>
</dbReference>
<dbReference type="GO" id="GO:0005737">
    <property type="term" value="C:cytoplasm"/>
    <property type="evidence" value="ECO:0007669"/>
    <property type="project" value="UniProtKB-SubCell"/>
</dbReference>
<dbReference type="GO" id="GO:0004534">
    <property type="term" value="F:5'-3' RNA exonuclease activity"/>
    <property type="evidence" value="ECO:0007669"/>
    <property type="project" value="UniProtKB-UniRule"/>
</dbReference>
<dbReference type="GO" id="GO:0003723">
    <property type="term" value="F:RNA binding"/>
    <property type="evidence" value="ECO:0007669"/>
    <property type="project" value="UniProtKB-UniRule"/>
</dbReference>
<dbReference type="GO" id="GO:0004521">
    <property type="term" value="F:RNA endonuclease activity"/>
    <property type="evidence" value="ECO:0007669"/>
    <property type="project" value="UniProtKB-UniRule"/>
</dbReference>
<dbReference type="GO" id="GO:0008270">
    <property type="term" value="F:zinc ion binding"/>
    <property type="evidence" value="ECO:0007669"/>
    <property type="project" value="InterPro"/>
</dbReference>
<dbReference type="GO" id="GO:0006364">
    <property type="term" value="P:rRNA processing"/>
    <property type="evidence" value="ECO:0007669"/>
    <property type="project" value="UniProtKB-UniRule"/>
</dbReference>
<dbReference type="CDD" id="cd07714">
    <property type="entry name" value="RNaseJ_MBL-fold"/>
    <property type="match status" value="1"/>
</dbReference>
<dbReference type="FunFam" id="3.10.20.580:FF:000001">
    <property type="entry name" value="Ribonuclease J"/>
    <property type="match status" value="1"/>
</dbReference>
<dbReference type="Gene3D" id="3.10.20.580">
    <property type="match status" value="1"/>
</dbReference>
<dbReference type="Gene3D" id="3.40.50.10710">
    <property type="entry name" value="Metallo-hydrolase/oxidoreductase"/>
    <property type="match status" value="1"/>
</dbReference>
<dbReference type="Gene3D" id="3.60.15.10">
    <property type="entry name" value="Ribonuclease Z/Hydroxyacylglutathione hydrolase-like"/>
    <property type="match status" value="1"/>
</dbReference>
<dbReference type="HAMAP" id="MF_01491">
    <property type="entry name" value="RNase_J_bact"/>
    <property type="match status" value="1"/>
</dbReference>
<dbReference type="InterPro" id="IPR001279">
    <property type="entry name" value="Metallo-B-lactamas"/>
</dbReference>
<dbReference type="InterPro" id="IPR036866">
    <property type="entry name" value="RibonucZ/Hydroxyglut_hydro"/>
</dbReference>
<dbReference type="InterPro" id="IPR011108">
    <property type="entry name" value="RMMBL"/>
</dbReference>
<dbReference type="InterPro" id="IPR004613">
    <property type="entry name" value="RNase_J"/>
</dbReference>
<dbReference type="InterPro" id="IPR042173">
    <property type="entry name" value="RNase_J_2"/>
</dbReference>
<dbReference type="InterPro" id="IPR055132">
    <property type="entry name" value="RNase_J_b_CASP"/>
</dbReference>
<dbReference type="InterPro" id="IPR030854">
    <property type="entry name" value="RNase_J_bac"/>
</dbReference>
<dbReference type="InterPro" id="IPR041636">
    <property type="entry name" value="RNase_J_C"/>
</dbReference>
<dbReference type="InterPro" id="IPR001587">
    <property type="entry name" value="RNase_J_CS"/>
</dbReference>
<dbReference type="NCBIfam" id="TIGR00649">
    <property type="entry name" value="MG423"/>
    <property type="match status" value="1"/>
</dbReference>
<dbReference type="NCBIfam" id="NF047419">
    <property type="entry name" value="RNase_J1_RnjA"/>
    <property type="match status" value="1"/>
</dbReference>
<dbReference type="PANTHER" id="PTHR43694">
    <property type="entry name" value="RIBONUCLEASE J"/>
    <property type="match status" value="1"/>
</dbReference>
<dbReference type="PANTHER" id="PTHR43694:SF1">
    <property type="entry name" value="RIBONUCLEASE J"/>
    <property type="match status" value="1"/>
</dbReference>
<dbReference type="Pfam" id="PF00753">
    <property type="entry name" value="Lactamase_B"/>
    <property type="match status" value="1"/>
</dbReference>
<dbReference type="Pfam" id="PF07521">
    <property type="entry name" value="RMMBL"/>
    <property type="match status" value="1"/>
</dbReference>
<dbReference type="Pfam" id="PF22505">
    <property type="entry name" value="RNase_J_b_CASP"/>
    <property type="match status" value="1"/>
</dbReference>
<dbReference type="Pfam" id="PF17770">
    <property type="entry name" value="RNase_J_C"/>
    <property type="match status" value="1"/>
</dbReference>
<dbReference type="PIRSF" id="PIRSF004803">
    <property type="entry name" value="RnjA"/>
    <property type="match status" value="1"/>
</dbReference>
<dbReference type="SMART" id="SM00849">
    <property type="entry name" value="Lactamase_B"/>
    <property type="match status" value="1"/>
</dbReference>
<dbReference type="SUPFAM" id="SSF56281">
    <property type="entry name" value="Metallo-hydrolase/oxidoreductase"/>
    <property type="match status" value="1"/>
</dbReference>
<dbReference type="PROSITE" id="PS01292">
    <property type="entry name" value="UPF0036"/>
    <property type="match status" value="1"/>
</dbReference>